<protein>
    <recommendedName>
        <fullName evidence="4">Nucleotidyltransferase MB21D2</fullName>
        <ecNumber evidence="2">2.7.7.-</ecNumber>
    </recommendedName>
    <alternativeName>
        <fullName evidence="4">Mab-21 domain-containing protein 2</fullName>
    </alternativeName>
</protein>
<feature type="chain" id="PRO_0000239304" description="Nucleotidyltransferase MB21D2">
    <location>
        <begin position="1"/>
        <end position="428"/>
    </location>
</feature>
<feature type="region of interest" description="Disordered" evidence="3">
    <location>
        <begin position="366"/>
        <end position="389"/>
    </location>
</feature>
<feature type="compositionally biased region" description="Polar residues" evidence="3">
    <location>
        <begin position="368"/>
        <end position="379"/>
    </location>
</feature>
<feature type="modified residue" description="Phosphothreonine" evidence="7">
    <location>
        <position position="372"/>
    </location>
</feature>
<feature type="modified residue" description="Phosphoserine" evidence="6 7">
    <location>
        <position position="373"/>
    </location>
</feature>
<feature type="modified residue" description="Phosphoserine" evidence="7">
    <location>
        <position position="376"/>
    </location>
</feature>
<feature type="modified residue" description="Phosphoserine" evidence="7">
    <location>
        <position position="379"/>
    </location>
</feature>
<feature type="sequence conflict" description="In Ref. 2; AAH85092." evidence="4" ref="2">
    <original>MLQTPMT</original>
    <variation>ML</variation>
    <location>
        <begin position="1"/>
        <end position="7"/>
    </location>
</feature>
<feature type="sequence conflict" description="In Ref. 2; AAH85092." evidence="4" ref="2">
    <original>L</original>
    <variation>P</variation>
    <location>
        <position position="332"/>
    </location>
</feature>
<proteinExistence type="evidence at protein level"/>
<evidence type="ECO:0000250" key="1">
    <source>
        <dbReference type="UniProtKB" id="Q8IYB1"/>
    </source>
</evidence>
<evidence type="ECO:0000250" key="2">
    <source>
        <dbReference type="UniProtKB" id="Q8N884"/>
    </source>
</evidence>
<evidence type="ECO:0000256" key="3">
    <source>
        <dbReference type="SAM" id="MobiDB-lite"/>
    </source>
</evidence>
<evidence type="ECO:0000305" key="4"/>
<evidence type="ECO:0000312" key="5">
    <source>
        <dbReference type="MGI" id="MGI:1917028"/>
    </source>
</evidence>
<evidence type="ECO:0007744" key="6">
    <source>
    </source>
</evidence>
<evidence type="ECO:0007744" key="7">
    <source>
    </source>
</evidence>
<comment type="function">
    <text evidence="1">Probable nucleotidyltransferase that catalyzes the formation of cyclic dinucleotide second messenger in response to some unknown stimulus.</text>
</comment>
<comment type="similarity">
    <text evidence="4">Belongs to the mab-21 family.</text>
</comment>
<reference key="1">
    <citation type="journal article" date="2005" name="Science">
        <title>The transcriptional landscape of the mammalian genome.</title>
        <authorList>
            <person name="Carninci P."/>
            <person name="Kasukawa T."/>
            <person name="Katayama S."/>
            <person name="Gough J."/>
            <person name="Frith M.C."/>
            <person name="Maeda N."/>
            <person name="Oyama R."/>
            <person name="Ravasi T."/>
            <person name="Lenhard B."/>
            <person name="Wells C."/>
            <person name="Kodzius R."/>
            <person name="Shimokawa K."/>
            <person name="Bajic V.B."/>
            <person name="Brenner S.E."/>
            <person name="Batalov S."/>
            <person name="Forrest A.R."/>
            <person name="Zavolan M."/>
            <person name="Davis M.J."/>
            <person name="Wilming L.G."/>
            <person name="Aidinis V."/>
            <person name="Allen J.E."/>
            <person name="Ambesi-Impiombato A."/>
            <person name="Apweiler R."/>
            <person name="Aturaliya R.N."/>
            <person name="Bailey T.L."/>
            <person name="Bansal M."/>
            <person name="Baxter L."/>
            <person name="Beisel K.W."/>
            <person name="Bersano T."/>
            <person name="Bono H."/>
            <person name="Chalk A.M."/>
            <person name="Chiu K.P."/>
            <person name="Choudhary V."/>
            <person name="Christoffels A."/>
            <person name="Clutterbuck D.R."/>
            <person name="Crowe M.L."/>
            <person name="Dalla E."/>
            <person name="Dalrymple B.P."/>
            <person name="de Bono B."/>
            <person name="Della Gatta G."/>
            <person name="di Bernardo D."/>
            <person name="Down T."/>
            <person name="Engstrom P."/>
            <person name="Fagiolini M."/>
            <person name="Faulkner G."/>
            <person name="Fletcher C.F."/>
            <person name="Fukushima T."/>
            <person name="Furuno M."/>
            <person name="Futaki S."/>
            <person name="Gariboldi M."/>
            <person name="Georgii-Hemming P."/>
            <person name="Gingeras T.R."/>
            <person name="Gojobori T."/>
            <person name="Green R.E."/>
            <person name="Gustincich S."/>
            <person name="Harbers M."/>
            <person name="Hayashi Y."/>
            <person name="Hensch T.K."/>
            <person name="Hirokawa N."/>
            <person name="Hill D."/>
            <person name="Huminiecki L."/>
            <person name="Iacono M."/>
            <person name="Ikeo K."/>
            <person name="Iwama A."/>
            <person name="Ishikawa T."/>
            <person name="Jakt M."/>
            <person name="Kanapin A."/>
            <person name="Katoh M."/>
            <person name="Kawasawa Y."/>
            <person name="Kelso J."/>
            <person name="Kitamura H."/>
            <person name="Kitano H."/>
            <person name="Kollias G."/>
            <person name="Krishnan S.P."/>
            <person name="Kruger A."/>
            <person name="Kummerfeld S.K."/>
            <person name="Kurochkin I.V."/>
            <person name="Lareau L.F."/>
            <person name="Lazarevic D."/>
            <person name="Lipovich L."/>
            <person name="Liu J."/>
            <person name="Liuni S."/>
            <person name="McWilliam S."/>
            <person name="Madan Babu M."/>
            <person name="Madera M."/>
            <person name="Marchionni L."/>
            <person name="Matsuda H."/>
            <person name="Matsuzawa S."/>
            <person name="Miki H."/>
            <person name="Mignone F."/>
            <person name="Miyake S."/>
            <person name="Morris K."/>
            <person name="Mottagui-Tabar S."/>
            <person name="Mulder N."/>
            <person name="Nakano N."/>
            <person name="Nakauchi H."/>
            <person name="Ng P."/>
            <person name="Nilsson R."/>
            <person name="Nishiguchi S."/>
            <person name="Nishikawa S."/>
            <person name="Nori F."/>
            <person name="Ohara O."/>
            <person name="Okazaki Y."/>
            <person name="Orlando V."/>
            <person name="Pang K.C."/>
            <person name="Pavan W.J."/>
            <person name="Pavesi G."/>
            <person name="Pesole G."/>
            <person name="Petrovsky N."/>
            <person name="Piazza S."/>
            <person name="Reed J."/>
            <person name="Reid J.F."/>
            <person name="Ring B.Z."/>
            <person name="Ringwald M."/>
            <person name="Rost B."/>
            <person name="Ruan Y."/>
            <person name="Salzberg S.L."/>
            <person name="Sandelin A."/>
            <person name="Schneider C."/>
            <person name="Schoenbach C."/>
            <person name="Sekiguchi K."/>
            <person name="Semple C.A."/>
            <person name="Seno S."/>
            <person name="Sessa L."/>
            <person name="Sheng Y."/>
            <person name="Shibata Y."/>
            <person name="Shimada H."/>
            <person name="Shimada K."/>
            <person name="Silva D."/>
            <person name="Sinclair B."/>
            <person name="Sperling S."/>
            <person name="Stupka E."/>
            <person name="Sugiura K."/>
            <person name="Sultana R."/>
            <person name="Takenaka Y."/>
            <person name="Taki K."/>
            <person name="Tammoja K."/>
            <person name="Tan S.L."/>
            <person name="Tang S."/>
            <person name="Taylor M.S."/>
            <person name="Tegner J."/>
            <person name="Teichmann S.A."/>
            <person name="Ueda H.R."/>
            <person name="van Nimwegen E."/>
            <person name="Verardo R."/>
            <person name="Wei C.L."/>
            <person name="Yagi K."/>
            <person name="Yamanishi H."/>
            <person name="Zabarovsky E."/>
            <person name="Zhu S."/>
            <person name="Zimmer A."/>
            <person name="Hide W."/>
            <person name="Bult C."/>
            <person name="Grimmond S.M."/>
            <person name="Teasdale R.D."/>
            <person name="Liu E.T."/>
            <person name="Brusic V."/>
            <person name="Quackenbush J."/>
            <person name="Wahlestedt C."/>
            <person name="Mattick J.S."/>
            <person name="Hume D.A."/>
            <person name="Kai C."/>
            <person name="Sasaki D."/>
            <person name="Tomaru Y."/>
            <person name="Fukuda S."/>
            <person name="Kanamori-Katayama M."/>
            <person name="Suzuki M."/>
            <person name="Aoki J."/>
            <person name="Arakawa T."/>
            <person name="Iida J."/>
            <person name="Imamura K."/>
            <person name="Itoh M."/>
            <person name="Kato T."/>
            <person name="Kawaji H."/>
            <person name="Kawagashira N."/>
            <person name="Kawashima T."/>
            <person name="Kojima M."/>
            <person name="Kondo S."/>
            <person name="Konno H."/>
            <person name="Nakano K."/>
            <person name="Ninomiya N."/>
            <person name="Nishio T."/>
            <person name="Okada M."/>
            <person name="Plessy C."/>
            <person name="Shibata K."/>
            <person name="Shiraki T."/>
            <person name="Suzuki S."/>
            <person name="Tagami M."/>
            <person name="Waki K."/>
            <person name="Watahiki A."/>
            <person name="Okamura-Oho Y."/>
            <person name="Suzuki H."/>
            <person name="Kawai J."/>
            <person name="Hayashizaki Y."/>
        </authorList>
    </citation>
    <scope>NUCLEOTIDE SEQUENCE [LARGE SCALE MRNA]</scope>
    <source>
        <strain>C57BL/6J</strain>
        <tissue>Thymus</tissue>
    </source>
</reference>
<reference key="2">
    <citation type="journal article" date="2004" name="Genome Res.">
        <title>The status, quality, and expansion of the NIH full-length cDNA project: the Mammalian Gene Collection (MGC).</title>
        <authorList>
            <consortium name="The MGC Project Team"/>
        </authorList>
    </citation>
    <scope>NUCLEOTIDE SEQUENCE [LARGE SCALE MRNA]</scope>
    <source>
        <strain>B5/EGFP</strain>
        <tissue>Trophoblast stem cell</tissue>
    </source>
</reference>
<reference key="3">
    <citation type="journal article" date="2007" name="Proc. Natl. Acad. Sci. U.S.A.">
        <title>Large-scale phosphorylation analysis of mouse liver.</title>
        <authorList>
            <person name="Villen J."/>
            <person name="Beausoleil S.A."/>
            <person name="Gerber S.A."/>
            <person name="Gygi S.P."/>
        </authorList>
    </citation>
    <scope>PHOSPHORYLATION [LARGE SCALE ANALYSIS] AT SER-373</scope>
    <scope>IDENTIFICATION BY MASS SPECTROMETRY [LARGE SCALE ANALYSIS]</scope>
    <source>
        <tissue>Liver</tissue>
    </source>
</reference>
<reference key="4">
    <citation type="journal article" date="2010" name="Cell">
        <title>A tissue-specific atlas of mouse protein phosphorylation and expression.</title>
        <authorList>
            <person name="Huttlin E.L."/>
            <person name="Jedrychowski M.P."/>
            <person name="Elias J.E."/>
            <person name="Goswami T."/>
            <person name="Rad R."/>
            <person name="Beausoleil S.A."/>
            <person name="Villen J."/>
            <person name="Haas W."/>
            <person name="Sowa M.E."/>
            <person name="Gygi S.P."/>
        </authorList>
    </citation>
    <scope>PHOSPHORYLATION [LARGE SCALE ANALYSIS] AT THR-372; SER-373; SER-376 AND SER-379</scope>
    <scope>IDENTIFICATION BY MASS SPECTROMETRY [LARGE SCALE ANALYSIS]</scope>
    <source>
        <tissue>Brain</tissue>
        <tissue>Heart</tissue>
        <tissue>Kidney</tissue>
        <tissue>Lung</tissue>
    </source>
</reference>
<accession>Q8C525</accession>
<accession>Q5U4H4</accession>
<dbReference type="EC" id="2.7.7.-" evidence="2"/>
<dbReference type="EMBL" id="AK079722">
    <property type="protein sequence ID" value="BAC37732.1"/>
    <property type="molecule type" value="mRNA"/>
</dbReference>
<dbReference type="EMBL" id="BC085092">
    <property type="protein sequence ID" value="AAH85092.1"/>
    <property type="molecule type" value="mRNA"/>
</dbReference>
<dbReference type="SMR" id="Q8C525"/>
<dbReference type="FunCoup" id="Q8C525">
    <property type="interactions" value="18"/>
</dbReference>
<dbReference type="STRING" id="10090.ENSMUSP00000097600"/>
<dbReference type="iPTMnet" id="Q8C525"/>
<dbReference type="PhosphoSitePlus" id="Q8C525"/>
<dbReference type="PaxDb" id="10090-ENSMUSP00000097600"/>
<dbReference type="ProteomicsDB" id="295744"/>
<dbReference type="Pumba" id="Q8C525"/>
<dbReference type="AGR" id="MGI:1917028"/>
<dbReference type="MGI" id="MGI:1917028">
    <property type="gene designation" value="Mb21d2"/>
</dbReference>
<dbReference type="eggNOG" id="KOG3963">
    <property type="taxonomic scope" value="Eukaryota"/>
</dbReference>
<dbReference type="InParanoid" id="Q8C525"/>
<dbReference type="PhylomeDB" id="Q8C525"/>
<dbReference type="ChiTaRS" id="Mb21d2">
    <property type="organism name" value="mouse"/>
</dbReference>
<dbReference type="PRO" id="PR:Q8C525"/>
<dbReference type="Proteomes" id="UP000000589">
    <property type="component" value="Unplaced"/>
</dbReference>
<dbReference type="RNAct" id="Q8C525">
    <property type="molecule type" value="protein"/>
</dbReference>
<dbReference type="GO" id="GO:0016779">
    <property type="term" value="F:nucleotidyltransferase activity"/>
    <property type="evidence" value="ECO:0007669"/>
    <property type="project" value="UniProtKB-KW"/>
</dbReference>
<dbReference type="GO" id="GO:0044877">
    <property type="term" value="F:protein-containing complex binding"/>
    <property type="evidence" value="ECO:0000266"/>
    <property type="project" value="MGI"/>
</dbReference>
<dbReference type="FunFam" id="1.10.1410.40:FF:000005">
    <property type="entry name" value="MB21D2 isoform 1"/>
    <property type="match status" value="1"/>
</dbReference>
<dbReference type="FunFam" id="3.30.460.90:FF:000003">
    <property type="entry name" value="MB21D2 isoform 1"/>
    <property type="match status" value="1"/>
</dbReference>
<dbReference type="Gene3D" id="1.10.1410.40">
    <property type="match status" value="1"/>
</dbReference>
<dbReference type="Gene3D" id="3.30.460.90">
    <property type="match status" value="1"/>
</dbReference>
<dbReference type="InterPro" id="IPR046903">
    <property type="entry name" value="Mab-21-like_nuc_Trfase"/>
</dbReference>
<dbReference type="InterPro" id="IPR046906">
    <property type="entry name" value="Mab-21_HhH/H2TH-like"/>
</dbReference>
<dbReference type="InterPro" id="IPR024810">
    <property type="entry name" value="MAB21L/cGLR"/>
</dbReference>
<dbReference type="PANTHER" id="PTHR10656">
    <property type="entry name" value="CELL FATE DETERMINING PROTEIN MAB21-RELATED"/>
    <property type="match status" value="1"/>
</dbReference>
<dbReference type="PANTHER" id="PTHR10656:SF47">
    <property type="entry name" value="NUCLEOTIDYLTRANSFERASE MB21D2"/>
    <property type="match status" value="1"/>
</dbReference>
<dbReference type="Pfam" id="PF03281">
    <property type="entry name" value="Mab-21"/>
    <property type="match status" value="1"/>
</dbReference>
<dbReference type="Pfam" id="PF20266">
    <property type="entry name" value="Mab-21_C"/>
    <property type="match status" value="1"/>
</dbReference>
<dbReference type="SMART" id="SM01265">
    <property type="entry name" value="Mab-21"/>
    <property type="match status" value="1"/>
</dbReference>
<name>M21D2_MOUSE</name>
<organism>
    <name type="scientific">Mus musculus</name>
    <name type="common">Mouse</name>
    <dbReference type="NCBI Taxonomy" id="10090"/>
    <lineage>
        <taxon>Eukaryota</taxon>
        <taxon>Metazoa</taxon>
        <taxon>Chordata</taxon>
        <taxon>Craniata</taxon>
        <taxon>Vertebrata</taxon>
        <taxon>Euteleostomi</taxon>
        <taxon>Mammalia</taxon>
        <taxon>Eutheria</taxon>
        <taxon>Euarchontoglires</taxon>
        <taxon>Glires</taxon>
        <taxon>Rodentia</taxon>
        <taxon>Myomorpha</taxon>
        <taxon>Muroidea</taxon>
        <taxon>Muridae</taxon>
        <taxon>Murinae</taxon>
        <taxon>Mus</taxon>
        <taxon>Mus</taxon>
    </lineage>
</organism>
<sequence>MLQTPMTGMVQKLDQKLPVANEYLLLSGGVREGVVDLDLDELNVYARGTDYDMDFTLLVPALKLHDRNQPVTLDMRHSALCHSWLSLRLFDEGTISKWKGCCTIADHINGATNYFFSPTKVADWFYDSISIVLSEIQKKPQRGMPKVEKVEKNGTIISIILGVGSSRMLYDIVPVVSFKGWPAVAQSWLMENHFWDGKITEEEVISGFYLVPACSYKGKKDNEWRLSFARSEVQLKKCISGSLMQAYQACKAIIIKLLSRPKAISPYHLRSMMLWACDRLPASYLAQEDYAAHFLLGLIDDLQHCLVNKMCPNYFIPQCNMLEHLSEETVMLHARKLSSVRSDPAEHLRTAIEHVKAANRLTLKLQRRGSTTSIPSPQSDGGDPNQPDDRLAKKLQQLVTENPGKSISVFINPDDVTRPHFRIDDKFF</sequence>
<keyword id="KW-0548">Nucleotidyltransferase</keyword>
<keyword id="KW-0597">Phosphoprotein</keyword>
<keyword id="KW-1185">Reference proteome</keyword>
<keyword id="KW-0808">Transferase</keyword>
<gene>
    <name evidence="5" type="primary">Mb21d2</name>
</gene>